<keyword id="KW-0002">3D-structure</keyword>
<keyword id="KW-0067">ATP-binding</keyword>
<keyword id="KW-0175">Coiled coil</keyword>
<keyword id="KW-0227">DNA damage</keyword>
<keyword id="KW-0234">DNA repair</keyword>
<keyword id="KW-0378">Hydrolase</keyword>
<keyword id="KW-0479">Metal-binding</keyword>
<keyword id="KW-0547">Nucleotide-binding</keyword>
<keyword id="KW-1185">Reference proteome</keyword>
<keyword id="KW-0862">Zinc</keyword>
<dbReference type="EMBL" id="L77117">
    <property type="protein sequence ID" value="AAB99331.1"/>
    <property type="molecule type" value="Genomic_DNA"/>
</dbReference>
<dbReference type="PIR" id="A64465">
    <property type="entry name" value="A64465"/>
</dbReference>
<dbReference type="PDB" id="3AUX">
    <property type="method" value="X-ray"/>
    <property type="resolution" value="2.80 A"/>
    <property type="chains" value="A=1-190, A=825-1005"/>
</dbReference>
<dbReference type="PDB" id="3AUY">
    <property type="method" value="X-ray"/>
    <property type="resolution" value="2.70 A"/>
    <property type="chains" value="A/B=11-190, A/B=825-1005"/>
</dbReference>
<dbReference type="PDB" id="3AV0">
    <property type="method" value="X-ray"/>
    <property type="resolution" value="3.10 A"/>
    <property type="chains" value="B=1-190, B=825-1005"/>
</dbReference>
<dbReference type="PDB" id="5DNY">
    <property type="method" value="X-ray"/>
    <property type="resolution" value="3.11 A"/>
    <property type="chains" value="B/D=1-190, B/D=825-1005"/>
</dbReference>
<dbReference type="PDB" id="5F3W">
    <property type="method" value="X-ray"/>
    <property type="resolution" value="3.11 A"/>
    <property type="chains" value="B/D=1-190, B/D=825-1005"/>
</dbReference>
<dbReference type="PDBsum" id="3AUX"/>
<dbReference type="PDBsum" id="3AUY"/>
<dbReference type="PDBsum" id="3AV0"/>
<dbReference type="PDBsum" id="5DNY"/>
<dbReference type="PDBsum" id="5F3W"/>
<dbReference type="SMR" id="Q58718"/>
<dbReference type="STRING" id="243232.MJ_1322"/>
<dbReference type="PaxDb" id="243232-MJ_1322"/>
<dbReference type="EnsemblBacteria" id="AAB99331">
    <property type="protein sequence ID" value="AAB99331"/>
    <property type="gene ID" value="MJ_1322"/>
</dbReference>
<dbReference type="KEGG" id="mja:MJ_1322"/>
<dbReference type="eggNOG" id="arCOG00368">
    <property type="taxonomic scope" value="Archaea"/>
</dbReference>
<dbReference type="HOGENOM" id="CLU_004785_0_2_2"/>
<dbReference type="InParanoid" id="Q58718"/>
<dbReference type="OrthoDB" id="25344at2157"/>
<dbReference type="PhylomeDB" id="Q58718"/>
<dbReference type="EvolutionaryTrace" id="Q58718"/>
<dbReference type="Proteomes" id="UP000000805">
    <property type="component" value="Chromosome"/>
</dbReference>
<dbReference type="GO" id="GO:1990391">
    <property type="term" value="C:DNA repair complex"/>
    <property type="evidence" value="ECO:0000318"/>
    <property type="project" value="GO_Central"/>
</dbReference>
<dbReference type="GO" id="GO:0005524">
    <property type="term" value="F:ATP binding"/>
    <property type="evidence" value="ECO:0007669"/>
    <property type="project" value="UniProtKB-UniRule"/>
</dbReference>
<dbReference type="GO" id="GO:0016887">
    <property type="term" value="F:ATP hydrolysis activity"/>
    <property type="evidence" value="ECO:0007669"/>
    <property type="project" value="UniProtKB-UniRule"/>
</dbReference>
<dbReference type="GO" id="GO:0004529">
    <property type="term" value="F:DNA exonuclease activity"/>
    <property type="evidence" value="ECO:0000318"/>
    <property type="project" value="GO_Central"/>
</dbReference>
<dbReference type="GO" id="GO:0008270">
    <property type="term" value="F:zinc ion binding"/>
    <property type="evidence" value="ECO:0007669"/>
    <property type="project" value="UniProtKB-UniRule"/>
</dbReference>
<dbReference type="GO" id="GO:0006281">
    <property type="term" value="P:DNA repair"/>
    <property type="evidence" value="ECO:0000318"/>
    <property type="project" value="GO_Central"/>
</dbReference>
<dbReference type="GO" id="GO:0006302">
    <property type="term" value="P:double-strand break repair"/>
    <property type="evidence" value="ECO:0007669"/>
    <property type="project" value="UniProtKB-UniRule"/>
</dbReference>
<dbReference type="Gene3D" id="1.10.287.510">
    <property type="entry name" value="Helix hairpin bin"/>
    <property type="match status" value="1"/>
</dbReference>
<dbReference type="Gene3D" id="3.40.50.300">
    <property type="entry name" value="P-loop containing nucleotide triphosphate hydrolases"/>
    <property type="match status" value="2"/>
</dbReference>
<dbReference type="HAMAP" id="MF_00449">
    <property type="entry name" value="RAD50"/>
    <property type="match status" value="1"/>
</dbReference>
<dbReference type="InterPro" id="IPR003593">
    <property type="entry name" value="AAA+_ATPase"/>
</dbReference>
<dbReference type="InterPro" id="IPR027417">
    <property type="entry name" value="P-loop_NTPase"/>
</dbReference>
<dbReference type="InterPro" id="IPR038729">
    <property type="entry name" value="Rad50/SbcC_AAA"/>
</dbReference>
<dbReference type="InterPro" id="IPR022982">
    <property type="entry name" value="Rad50_ATPase_archaeal"/>
</dbReference>
<dbReference type="InterPro" id="IPR013134">
    <property type="entry name" value="Zn_hook_RAD50"/>
</dbReference>
<dbReference type="PANTHER" id="PTHR32114">
    <property type="entry name" value="ABC TRANSPORTER ABCH.3"/>
    <property type="match status" value="1"/>
</dbReference>
<dbReference type="PANTHER" id="PTHR32114:SF2">
    <property type="entry name" value="ABC TRANSPORTER ABCH.3"/>
    <property type="match status" value="1"/>
</dbReference>
<dbReference type="Pfam" id="PF13476">
    <property type="entry name" value="AAA_23"/>
    <property type="match status" value="1"/>
</dbReference>
<dbReference type="Pfam" id="PF04423">
    <property type="entry name" value="Rad50_zn_hook"/>
    <property type="match status" value="1"/>
</dbReference>
<dbReference type="SMART" id="SM00382">
    <property type="entry name" value="AAA"/>
    <property type="match status" value="1"/>
</dbReference>
<dbReference type="SUPFAM" id="SSF52540">
    <property type="entry name" value="P-loop containing nucleoside triphosphate hydrolases"/>
    <property type="match status" value="2"/>
</dbReference>
<dbReference type="SUPFAM" id="SSF75712">
    <property type="entry name" value="Rad50 coiled-coil Zn hook"/>
    <property type="match status" value="1"/>
</dbReference>
<dbReference type="PROSITE" id="PS51131">
    <property type="entry name" value="ZN_HOOK"/>
    <property type="match status" value="1"/>
</dbReference>
<evidence type="ECO:0000255" key="1">
    <source>
        <dbReference type="HAMAP-Rule" id="MF_00449"/>
    </source>
</evidence>
<evidence type="ECO:0007744" key="2">
    <source>
        <dbReference type="PDB" id="3AUX"/>
    </source>
</evidence>
<evidence type="ECO:0007744" key="3">
    <source>
        <dbReference type="PDB" id="3AUY"/>
    </source>
</evidence>
<evidence type="ECO:0007744" key="4">
    <source>
        <dbReference type="PDB" id="3AV0"/>
    </source>
</evidence>
<evidence type="ECO:0007829" key="5">
    <source>
        <dbReference type="PDB" id="3AUY"/>
    </source>
</evidence>
<evidence type="ECO:0007829" key="6">
    <source>
        <dbReference type="PDB" id="3AV0"/>
    </source>
</evidence>
<evidence type="ECO:0007829" key="7">
    <source>
        <dbReference type="PDB" id="5DNY"/>
    </source>
</evidence>
<comment type="function">
    <text evidence="1">Part of the Rad50/Mre11 complex, which is involved in the early steps of DNA double-strand break (DSB) repair. The complex may facilitate opening of the processed DNA ends to aid in the recruitment of HerA and NurA. Rad50 controls the balance between DNA end bridging and DNA resection via ATP-dependent structural rearrangements of the Rad50/Mre11 complex.</text>
</comment>
<comment type="cofactor">
    <cofactor evidence="1">
        <name>Zn(2+)</name>
        <dbReference type="ChEBI" id="CHEBI:29105"/>
    </cofactor>
    <text evidence="1">Binds 1 zinc ion per homodimer.</text>
</comment>
<comment type="subunit">
    <text evidence="1">Homodimer. Forms a heterotetramer composed of two Mre11 subunits and two Rad50 subunits.</text>
</comment>
<comment type="domain">
    <text evidence="1">The two conserved Cys that bind zinc constitute the zinc-hook, which separates the large intramolecular coiled coil regions. The 2 Cys residues coordinate one molecule of zinc with the help of the 2 Cys residues of the zinc-hook of another Rad50 molecule, thereby forming a V-shaped homodimer.</text>
</comment>
<comment type="similarity">
    <text evidence="1">Belongs to the SMC family. RAD50 subfamily.</text>
</comment>
<protein>
    <recommendedName>
        <fullName evidence="1">DNA double-strand break repair Rad50 ATPase</fullName>
    </recommendedName>
</protein>
<name>RAD50_METJA</name>
<sequence>MSMILKEIRMNNFKSHVNSRIKFEKGIVAIIGENGSGKSSIFEAVFFALFGAGSNFNYDTIITKGKKSVYVELDFEVNGNNYKIIREYDSGRGGAKLYKNGKPYATTISAVNKAVNEILGVDRNMFLNSIYIKQGEIAKFLSLKPSEKLETVAKLLGIDEFEKCYQKMGEIVKEYEKRLERIEGELNYKENYEKELKNKMSQLEEKNKKLMEINDKLNKIKKEFEDIEKLFNEWENKKLLYEKFINKLEERKRALELKNQELKILEYDLNTVVEARETLNRHKDEYEKYKSLVDEIRKIESRLRELKSHYEDYLKLTKQLEIIKGDIEKLKEFINKSKYRDDIDNLDTLLNKIKDEIERVETIKDLLEELKNLNEEIEKIEKYKRICEECKEYYEKYLELEEKAVEYNKLTLEYITLLQEKKSIEKNINDLETRINKLLEETKNIDIESIENSLKEIEEKKKVLENLQKEKIELNKKLGEINSEIKRLKKILDELKEVEGKCPLCKTPIDENKKMELINQHKTQLNNKYTELEEINKKIREIEKDIEKLKKEIDKEENLKTLKTLYLEKQSQIEELELKLKNYKEQLDEINKKISNYVINGKPVDEILEDIKSQLNKFKNFYNQYLSAVSYLNSVDEEGIRNRIKEIENIVSGWNKEKCREELNKLREDEREINRLKDKLNELKNKEKELIEIENRRSLKFDKYKEYLGLTEKLEELKNIKDGLEEIYNICNSKILAIDNIKRKYNKEDIEIYLNNKILEVNKEINDIEERISYINQKLDEINYNEEEHKKIKELYENKRQELDNVREQKTEIETGIEYLKKDVESLKARLKEMSNLEKEKEKLTKFVEYLDKVRRIFGRNGFQAYLREKYVPLIQKYLNEAFSEFDLPYSFVELTKDFEVRVHAPNGVLTIDNLSGGEQIAVALSLRLAIANALIGNRVECIILDEPTVYLDENRRAKLAEIFRKVKSIPQMIIITHHRELEDVADVIINVKKDGNVSKVKING</sequence>
<accession>Q58718</accession>
<gene>
    <name evidence="1" type="primary">rad50</name>
    <name type="ordered locus">MJ1322</name>
</gene>
<feature type="chain" id="PRO_0000138654" description="DNA double-strand break repair Rad50 ATPase">
    <location>
        <begin position="1"/>
        <end position="1005"/>
    </location>
</feature>
<feature type="domain" description="Zinc-hook" evidence="1">
    <location>
        <begin position="457"/>
        <end position="554"/>
    </location>
</feature>
<feature type="coiled-coil region" evidence="1">
    <location>
        <begin position="189"/>
        <end position="230"/>
    </location>
</feature>
<feature type="coiled-coil region" evidence="1">
    <location>
        <begin position="292"/>
        <end position="321"/>
    </location>
</feature>
<feature type="coiled-coil region" evidence="1">
    <location>
        <begin position="346"/>
        <end position="379"/>
    </location>
</feature>
<feature type="coiled-coil region" evidence="1">
    <location>
        <begin position="404"/>
        <end position="498"/>
    </location>
</feature>
<feature type="coiled-coil region" evidence="1">
    <location>
        <begin position="523"/>
        <end position="600"/>
    </location>
</feature>
<feature type="coiled-coil region" evidence="1">
    <location>
        <begin position="656"/>
        <end position="692"/>
    </location>
</feature>
<feature type="coiled-coil region" evidence="1">
    <location>
        <begin position="800"/>
        <end position="834"/>
    </location>
</feature>
<feature type="binding site" evidence="1 3">
    <location>
        <position position="14"/>
    </location>
    <ligand>
        <name>ATP</name>
        <dbReference type="ChEBI" id="CHEBI:30616"/>
    </ligand>
</feature>
<feature type="binding site" evidence="2 3">
    <location>
        <begin position="35"/>
        <end position="40"/>
    </location>
    <ligand>
        <name>ATP</name>
        <dbReference type="ChEBI" id="CHEBI:30616"/>
    </ligand>
</feature>
<feature type="binding site" evidence="2 3">
    <location>
        <begin position="62"/>
        <end position="64"/>
    </location>
    <ligand>
        <name>ATP</name>
        <dbReference type="ChEBI" id="CHEBI:30616"/>
    </ligand>
</feature>
<feature type="binding site" evidence="1">
    <location>
        <position position="134"/>
    </location>
    <ligand>
        <name>ATP</name>
        <dbReference type="ChEBI" id="CHEBI:30616"/>
    </ligand>
</feature>
<feature type="binding site" evidence="1">
    <location>
        <position position="502"/>
    </location>
    <ligand>
        <name>Zn(2+)</name>
        <dbReference type="ChEBI" id="CHEBI:29105"/>
    </ligand>
</feature>
<feature type="binding site" evidence="1">
    <location>
        <position position="505"/>
    </location>
    <ligand>
        <name>Zn(2+)</name>
        <dbReference type="ChEBI" id="CHEBI:29105"/>
    </ligand>
</feature>
<feature type="strand" evidence="5">
    <location>
        <begin position="3"/>
        <end position="13"/>
    </location>
</feature>
<feature type="strand" evidence="5">
    <location>
        <begin position="16"/>
        <end position="22"/>
    </location>
</feature>
<feature type="strand" evidence="5">
    <location>
        <begin position="25"/>
        <end position="32"/>
    </location>
</feature>
<feature type="helix" evidence="5">
    <location>
        <begin position="38"/>
        <end position="50"/>
    </location>
</feature>
<feature type="strand" evidence="7">
    <location>
        <begin position="54"/>
        <end position="56"/>
    </location>
</feature>
<feature type="turn" evidence="5">
    <location>
        <begin position="58"/>
        <end position="61"/>
    </location>
</feature>
<feature type="strand" evidence="5">
    <location>
        <begin position="67"/>
        <end position="77"/>
    </location>
</feature>
<feature type="strand" evidence="5">
    <location>
        <begin position="80"/>
        <end position="89"/>
    </location>
</feature>
<feature type="strand" evidence="5">
    <location>
        <begin position="92"/>
        <end position="99"/>
    </location>
</feature>
<feature type="strand" evidence="5">
    <location>
        <begin position="102"/>
        <end position="105"/>
    </location>
</feature>
<feature type="helix" evidence="5">
    <location>
        <begin position="108"/>
        <end position="119"/>
    </location>
</feature>
<feature type="helix" evidence="5">
    <location>
        <begin position="123"/>
        <end position="130"/>
    </location>
</feature>
<feature type="helix" evidence="5">
    <location>
        <begin position="136"/>
        <end position="142"/>
    </location>
</feature>
<feature type="helix" evidence="5">
    <location>
        <begin position="145"/>
        <end position="156"/>
    </location>
</feature>
<feature type="helix" evidence="5">
    <location>
        <begin position="158"/>
        <end position="185"/>
    </location>
</feature>
<feature type="turn" evidence="6">
    <location>
        <begin position="186"/>
        <end position="188"/>
    </location>
</feature>
<feature type="helix" evidence="5">
    <location>
        <begin position="193"/>
        <end position="224"/>
    </location>
</feature>
<feature type="turn" evidence="5">
    <location>
        <begin position="228"/>
        <end position="230"/>
    </location>
</feature>
<feature type="helix" evidence="5">
    <location>
        <begin position="231"/>
        <end position="247"/>
    </location>
</feature>
<feature type="strand" evidence="5">
    <location>
        <begin position="255"/>
        <end position="257"/>
    </location>
</feature>
<feature type="strand" evidence="5">
    <location>
        <begin position="262"/>
        <end position="266"/>
    </location>
</feature>
<feature type="strand" evidence="5">
    <location>
        <begin position="269"/>
        <end position="271"/>
    </location>
</feature>
<feature type="helix" evidence="5">
    <location>
        <begin position="273"/>
        <end position="275"/>
    </location>
</feature>
<feature type="helix" evidence="5">
    <location>
        <begin position="278"/>
        <end position="296"/>
    </location>
</feature>
<feature type="strand" evidence="5">
    <location>
        <begin position="300"/>
        <end position="306"/>
    </location>
</feature>
<feature type="turn" evidence="5">
    <location>
        <begin position="307"/>
        <end position="310"/>
    </location>
</feature>
<feature type="helix" evidence="5">
    <location>
        <begin position="313"/>
        <end position="324"/>
    </location>
</feature>
<feature type="strand" evidence="5">
    <location>
        <begin position="331"/>
        <end position="338"/>
    </location>
</feature>
<feature type="helix" evidence="5">
    <location>
        <begin position="340"/>
        <end position="345"/>
    </location>
</feature>
<feature type="strand" evidence="5">
    <location>
        <begin position="347"/>
        <end position="355"/>
    </location>
</feature>
<feature type="helix" evidence="5">
    <location>
        <begin position="882"/>
        <end position="885"/>
    </location>
</feature>
<feature type="strand" evidence="5">
    <location>
        <begin position="999"/>
        <end position="1004"/>
    </location>
</feature>
<reference key="1">
    <citation type="journal article" date="1996" name="Science">
        <title>Complete genome sequence of the methanogenic archaeon, Methanococcus jannaschii.</title>
        <authorList>
            <person name="Bult C.J."/>
            <person name="White O."/>
            <person name="Olsen G.J."/>
            <person name="Zhou L."/>
            <person name="Fleischmann R.D."/>
            <person name="Sutton G.G."/>
            <person name="Blake J.A."/>
            <person name="FitzGerald L.M."/>
            <person name="Clayton R.A."/>
            <person name="Gocayne J.D."/>
            <person name="Kerlavage A.R."/>
            <person name="Dougherty B.A."/>
            <person name="Tomb J.-F."/>
            <person name="Adams M.D."/>
            <person name="Reich C.I."/>
            <person name="Overbeek R."/>
            <person name="Kirkness E.F."/>
            <person name="Weinstock K.G."/>
            <person name="Merrick J.M."/>
            <person name="Glodek A."/>
            <person name="Scott J.L."/>
            <person name="Geoghagen N.S.M."/>
            <person name="Weidman J.F."/>
            <person name="Fuhrmann J.L."/>
            <person name="Nguyen D."/>
            <person name="Utterback T.R."/>
            <person name="Kelley J.M."/>
            <person name="Peterson J.D."/>
            <person name="Sadow P.W."/>
            <person name="Hanna M.C."/>
            <person name="Cotton M.D."/>
            <person name="Roberts K.M."/>
            <person name="Hurst M.A."/>
            <person name="Kaine B.P."/>
            <person name="Borodovsky M."/>
            <person name="Klenk H.-P."/>
            <person name="Fraser C.M."/>
            <person name="Smith H.O."/>
            <person name="Woese C.R."/>
            <person name="Venter J.C."/>
        </authorList>
    </citation>
    <scope>NUCLEOTIDE SEQUENCE [LARGE SCALE GENOMIC DNA]</scope>
    <source>
        <strain>ATCC 43067 / DSM 2661 / JAL-1 / JCM 10045 / NBRC 100440</strain>
    </source>
</reference>
<reference evidence="2 3 4" key="2">
    <citation type="submission" date="2011-02" db="PDB data bank">
        <title>Crystal structure of the Mre11-Rad50-ATP S complex: understanding the interplay between Mre11 and Rad50.</title>
        <authorList>
            <person name="Lim H.S."/>
            <person name="Kim J.S."/>
            <person name="Park Y.B."/>
            <person name="Gwon G.H."/>
            <person name="Cho Y."/>
        </authorList>
    </citation>
    <scope>X-RAY CRYSTALLOGRAPHY (2.70 ANGSTROMS) IN COMPLEX WITH ADP</scope>
</reference>
<organism>
    <name type="scientific">Methanocaldococcus jannaschii (strain ATCC 43067 / DSM 2661 / JAL-1 / JCM 10045 / NBRC 100440)</name>
    <name type="common">Methanococcus jannaschii</name>
    <dbReference type="NCBI Taxonomy" id="243232"/>
    <lineage>
        <taxon>Archaea</taxon>
        <taxon>Methanobacteriati</taxon>
        <taxon>Methanobacteriota</taxon>
        <taxon>Methanomada group</taxon>
        <taxon>Methanococci</taxon>
        <taxon>Methanococcales</taxon>
        <taxon>Methanocaldococcaceae</taxon>
        <taxon>Methanocaldococcus</taxon>
    </lineage>
</organism>
<proteinExistence type="evidence at protein level"/>